<proteinExistence type="inferred from homology"/>
<organism>
    <name type="scientific">Yersinia pestis (strain Pestoides F)</name>
    <dbReference type="NCBI Taxonomy" id="386656"/>
    <lineage>
        <taxon>Bacteria</taxon>
        <taxon>Pseudomonadati</taxon>
        <taxon>Pseudomonadota</taxon>
        <taxon>Gammaproteobacteria</taxon>
        <taxon>Enterobacterales</taxon>
        <taxon>Yersiniaceae</taxon>
        <taxon>Yersinia</taxon>
    </lineage>
</organism>
<comment type="catalytic activity">
    <reaction evidence="1">
        <text>CMP + ATP = CDP + ADP</text>
        <dbReference type="Rhea" id="RHEA:11600"/>
        <dbReference type="ChEBI" id="CHEBI:30616"/>
        <dbReference type="ChEBI" id="CHEBI:58069"/>
        <dbReference type="ChEBI" id="CHEBI:60377"/>
        <dbReference type="ChEBI" id="CHEBI:456216"/>
        <dbReference type="EC" id="2.7.4.25"/>
    </reaction>
</comment>
<comment type="catalytic activity">
    <reaction evidence="1">
        <text>dCMP + ATP = dCDP + ADP</text>
        <dbReference type="Rhea" id="RHEA:25094"/>
        <dbReference type="ChEBI" id="CHEBI:30616"/>
        <dbReference type="ChEBI" id="CHEBI:57566"/>
        <dbReference type="ChEBI" id="CHEBI:58593"/>
        <dbReference type="ChEBI" id="CHEBI:456216"/>
        <dbReference type="EC" id="2.7.4.25"/>
    </reaction>
</comment>
<comment type="subcellular location">
    <subcellularLocation>
        <location evidence="1">Cytoplasm</location>
    </subcellularLocation>
</comment>
<comment type="similarity">
    <text evidence="1">Belongs to the cytidylate kinase family. Type 1 subfamily.</text>
</comment>
<sequence>MTAIAPVITVDGPSGAGKGTLCKALAESLNWRLLDSGAIYRVLALAALHHQVDISTEEALVPLAAHLDVRFVSQNGQLQVILEGEDVSNEIRTETVGNTASQAAAFPRVREALLRRQRAFREAPGLIADGRDMGTIVFPDAPVKIFLDASSQERAHRRMLQLQERGFNVNFERLLAEIQERDNRDRNRSVAPLVPAADALVLDSTSMSIEQVIEQALAYAQRILALPLKK</sequence>
<evidence type="ECO:0000255" key="1">
    <source>
        <dbReference type="HAMAP-Rule" id="MF_00238"/>
    </source>
</evidence>
<name>KCY_YERPP</name>
<feature type="chain" id="PRO_1000048319" description="Cytidylate kinase">
    <location>
        <begin position="1"/>
        <end position="230"/>
    </location>
</feature>
<feature type="binding site" evidence="1">
    <location>
        <begin position="12"/>
        <end position="20"/>
    </location>
    <ligand>
        <name>ATP</name>
        <dbReference type="ChEBI" id="CHEBI:30616"/>
    </ligand>
</feature>
<dbReference type="EC" id="2.7.4.25" evidence="1"/>
<dbReference type="EMBL" id="CP000668">
    <property type="protein sequence ID" value="ABP40679.1"/>
    <property type="molecule type" value="Genomic_DNA"/>
</dbReference>
<dbReference type="RefSeq" id="WP_002211324.1">
    <property type="nucleotide sequence ID" value="NZ_CP009715.1"/>
</dbReference>
<dbReference type="SMR" id="A4TN17"/>
<dbReference type="GeneID" id="57977187"/>
<dbReference type="KEGG" id="ypp:YPDSF_2304"/>
<dbReference type="PATRIC" id="fig|386656.14.peg.3798"/>
<dbReference type="GO" id="GO:0005829">
    <property type="term" value="C:cytosol"/>
    <property type="evidence" value="ECO:0007669"/>
    <property type="project" value="TreeGrafter"/>
</dbReference>
<dbReference type="GO" id="GO:0005524">
    <property type="term" value="F:ATP binding"/>
    <property type="evidence" value="ECO:0007669"/>
    <property type="project" value="UniProtKB-UniRule"/>
</dbReference>
<dbReference type="GO" id="GO:0036430">
    <property type="term" value="F:CMP kinase activity"/>
    <property type="evidence" value="ECO:0007669"/>
    <property type="project" value="RHEA"/>
</dbReference>
<dbReference type="GO" id="GO:0036431">
    <property type="term" value="F:dCMP kinase activity"/>
    <property type="evidence" value="ECO:0007669"/>
    <property type="project" value="RHEA"/>
</dbReference>
<dbReference type="GO" id="GO:0015949">
    <property type="term" value="P:nucleobase-containing small molecule interconversion"/>
    <property type="evidence" value="ECO:0007669"/>
    <property type="project" value="TreeGrafter"/>
</dbReference>
<dbReference type="GO" id="GO:0006220">
    <property type="term" value="P:pyrimidine nucleotide metabolic process"/>
    <property type="evidence" value="ECO:0007669"/>
    <property type="project" value="UniProtKB-UniRule"/>
</dbReference>
<dbReference type="CDD" id="cd02020">
    <property type="entry name" value="CMPK"/>
    <property type="match status" value="1"/>
</dbReference>
<dbReference type="FunFam" id="3.40.50.300:FF:000262">
    <property type="entry name" value="Cytidylate kinase"/>
    <property type="match status" value="1"/>
</dbReference>
<dbReference type="Gene3D" id="3.40.50.300">
    <property type="entry name" value="P-loop containing nucleotide triphosphate hydrolases"/>
    <property type="match status" value="1"/>
</dbReference>
<dbReference type="HAMAP" id="MF_00238">
    <property type="entry name" value="Cytidyl_kinase_type1"/>
    <property type="match status" value="1"/>
</dbReference>
<dbReference type="InterPro" id="IPR003136">
    <property type="entry name" value="Cytidylate_kin"/>
</dbReference>
<dbReference type="InterPro" id="IPR011994">
    <property type="entry name" value="Cytidylate_kinase_dom"/>
</dbReference>
<dbReference type="InterPro" id="IPR027417">
    <property type="entry name" value="P-loop_NTPase"/>
</dbReference>
<dbReference type="NCBIfam" id="TIGR00017">
    <property type="entry name" value="cmk"/>
    <property type="match status" value="1"/>
</dbReference>
<dbReference type="PANTHER" id="PTHR21299:SF2">
    <property type="entry name" value="CYTIDYLATE KINASE"/>
    <property type="match status" value="1"/>
</dbReference>
<dbReference type="PANTHER" id="PTHR21299">
    <property type="entry name" value="CYTIDYLATE KINASE/PANTOATE-BETA-ALANINE LIGASE"/>
    <property type="match status" value="1"/>
</dbReference>
<dbReference type="Pfam" id="PF02224">
    <property type="entry name" value="Cytidylate_kin"/>
    <property type="match status" value="1"/>
</dbReference>
<dbReference type="SUPFAM" id="SSF52540">
    <property type="entry name" value="P-loop containing nucleoside triphosphate hydrolases"/>
    <property type="match status" value="1"/>
</dbReference>
<reference key="1">
    <citation type="submission" date="2007-02" db="EMBL/GenBank/DDBJ databases">
        <title>Complete sequence of chromosome of Yersinia pestis Pestoides F.</title>
        <authorList>
            <consortium name="US DOE Joint Genome Institute"/>
            <person name="Copeland A."/>
            <person name="Lucas S."/>
            <person name="Lapidus A."/>
            <person name="Barry K."/>
            <person name="Detter J.C."/>
            <person name="Glavina del Rio T."/>
            <person name="Hammon N."/>
            <person name="Israni S."/>
            <person name="Dalin E."/>
            <person name="Tice H."/>
            <person name="Pitluck S."/>
            <person name="Di Bartolo G."/>
            <person name="Chain P."/>
            <person name="Malfatti S."/>
            <person name="Shin M."/>
            <person name="Vergez L."/>
            <person name="Schmutz J."/>
            <person name="Larimer F."/>
            <person name="Land M."/>
            <person name="Hauser L."/>
            <person name="Worsham P."/>
            <person name="Chu M."/>
            <person name="Bearden S."/>
            <person name="Garcia E."/>
            <person name="Richardson P."/>
        </authorList>
    </citation>
    <scope>NUCLEOTIDE SEQUENCE [LARGE SCALE GENOMIC DNA]</scope>
    <source>
        <strain>Pestoides F</strain>
    </source>
</reference>
<gene>
    <name evidence="1" type="primary">cmk</name>
    <name type="ordered locus">YPDSF_2304</name>
</gene>
<protein>
    <recommendedName>
        <fullName evidence="1">Cytidylate kinase</fullName>
        <shortName evidence="1">CK</shortName>
        <ecNumber evidence="1">2.7.4.25</ecNumber>
    </recommendedName>
    <alternativeName>
        <fullName evidence="1">Cytidine monophosphate kinase</fullName>
        <shortName evidence="1">CMP kinase</shortName>
    </alternativeName>
</protein>
<keyword id="KW-0067">ATP-binding</keyword>
<keyword id="KW-0963">Cytoplasm</keyword>
<keyword id="KW-0418">Kinase</keyword>
<keyword id="KW-0547">Nucleotide-binding</keyword>
<keyword id="KW-0808">Transferase</keyword>
<accession>A4TN17</accession>